<feature type="initiator methionine" description="Removed" evidence="2">
    <location>
        <position position="1"/>
    </location>
</feature>
<feature type="chain" id="PRO_1000050422" description="Putative pterin-4-alpha-carbinolamine dehydratase">
    <location>
        <begin position="2"/>
        <end position="94"/>
    </location>
</feature>
<name>PHS_MYCS2</name>
<evidence type="ECO:0000255" key="1">
    <source>
        <dbReference type="HAMAP-Rule" id="MF_00434"/>
    </source>
</evidence>
<evidence type="ECO:0000269" key="2">
    <source>
    </source>
</evidence>
<reference key="1">
    <citation type="submission" date="2006-10" db="EMBL/GenBank/DDBJ databases">
        <authorList>
            <person name="Fleischmann R.D."/>
            <person name="Dodson R.J."/>
            <person name="Haft D.H."/>
            <person name="Merkel J.S."/>
            <person name="Nelson W.C."/>
            <person name="Fraser C.M."/>
        </authorList>
    </citation>
    <scope>NUCLEOTIDE SEQUENCE [LARGE SCALE GENOMIC DNA]</scope>
    <source>
        <strain>ATCC 700084 / mc(2)155</strain>
    </source>
</reference>
<reference key="2">
    <citation type="journal article" date="2007" name="Genome Biol.">
        <title>Interrupted coding sequences in Mycobacterium smegmatis: authentic mutations or sequencing errors?</title>
        <authorList>
            <person name="Deshayes C."/>
            <person name="Perrodou E."/>
            <person name="Gallien S."/>
            <person name="Euphrasie D."/>
            <person name="Schaeffer C."/>
            <person name="Van-Dorsselaer A."/>
            <person name="Poch O."/>
            <person name="Lecompte O."/>
            <person name="Reyrat J.-M."/>
        </authorList>
    </citation>
    <scope>NUCLEOTIDE SEQUENCE [LARGE SCALE GENOMIC DNA]</scope>
    <source>
        <strain>ATCC 700084 / mc(2)155</strain>
    </source>
</reference>
<reference key="3">
    <citation type="journal article" date="2009" name="Genome Res.">
        <title>Ortho-proteogenomics: multiple proteomes investigation through orthology and a new MS-based protocol.</title>
        <authorList>
            <person name="Gallien S."/>
            <person name="Perrodou E."/>
            <person name="Carapito C."/>
            <person name="Deshayes C."/>
            <person name="Reyrat J.-M."/>
            <person name="Van Dorsselaer A."/>
            <person name="Poch O."/>
            <person name="Schaeffer C."/>
            <person name="Lecompte O."/>
        </authorList>
    </citation>
    <scope>NUCLEOTIDE SEQUENCE [LARGE SCALE GENOMIC DNA]</scope>
    <scope>IDENTIFICATION BY MASS SPECTROMETRY [LARGE SCALE ANALYSIS]</scope>
    <scope>CLEAVAGE OF INITIATOR METHIONINE</scope>
    <source>
        <strain>ATCC 700084 / mc(2)155</strain>
    </source>
</reference>
<gene>
    <name type="ordered locus">MSMEG_5150</name>
    <name type="ordered locus">MSMEI_5017</name>
</gene>
<organism>
    <name type="scientific">Mycolicibacterium smegmatis (strain ATCC 700084 / mc(2)155)</name>
    <name type="common">Mycobacterium smegmatis</name>
    <dbReference type="NCBI Taxonomy" id="246196"/>
    <lineage>
        <taxon>Bacteria</taxon>
        <taxon>Bacillati</taxon>
        <taxon>Actinomycetota</taxon>
        <taxon>Actinomycetes</taxon>
        <taxon>Mycobacteriales</taxon>
        <taxon>Mycobacteriaceae</taxon>
        <taxon>Mycolicibacterium</taxon>
    </lineage>
</organism>
<accession>A0R2K7</accession>
<accession>I7GDL4</accession>
<comment type="catalytic activity">
    <reaction evidence="1">
        <text>(4aS,6R)-4a-hydroxy-L-erythro-5,6,7,8-tetrahydrobiopterin = (6R)-L-erythro-6,7-dihydrobiopterin + H2O</text>
        <dbReference type="Rhea" id="RHEA:11920"/>
        <dbReference type="ChEBI" id="CHEBI:15377"/>
        <dbReference type="ChEBI" id="CHEBI:15642"/>
        <dbReference type="ChEBI" id="CHEBI:43120"/>
        <dbReference type="EC" id="4.2.1.96"/>
    </reaction>
</comment>
<comment type="similarity">
    <text evidence="1">Belongs to the pterin-4-alpha-carbinolamine dehydratase family.</text>
</comment>
<proteinExistence type="evidence at protein level"/>
<dbReference type="EC" id="4.2.1.96" evidence="1"/>
<dbReference type="EMBL" id="CP000480">
    <property type="protein sequence ID" value="ABK72204.1"/>
    <property type="molecule type" value="Genomic_DNA"/>
</dbReference>
<dbReference type="EMBL" id="CP001663">
    <property type="protein sequence ID" value="AFP41461.1"/>
    <property type="molecule type" value="Genomic_DNA"/>
</dbReference>
<dbReference type="RefSeq" id="WP_011730347.1">
    <property type="nucleotide sequence ID" value="NZ_SIJM01000038.1"/>
</dbReference>
<dbReference type="RefSeq" id="YP_889395.1">
    <property type="nucleotide sequence ID" value="NC_008596.1"/>
</dbReference>
<dbReference type="SMR" id="A0R2K7"/>
<dbReference type="STRING" id="246196.MSMEG_5150"/>
<dbReference type="PaxDb" id="246196-MSMEI_5017"/>
<dbReference type="KEGG" id="msb:LJ00_25470"/>
<dbReference type="KEGG" id="msg:MSMEI_5017"/>
<dbReference type="KEGG" id="msm:MSMEG_5150"/>
<dbReference type="PATRIC" id="fig|246196.19.peg.5024"/>
<dbReference type="eggNOG" id="COG2154">
    <property type="taxonomic scope" value="Bacteria"/>
</dbReference>
<dbReference type="OrthoDB" id="15077at2"/>
<dbReference type="Proteomes" id="UP000000757">
    <property type="component" value="Chromosome"/>
</dbReference>
<dbReference type="Proteomes" id="UP000006158">
    <property type="component" value="Chromosome"/>
</dbReference>
<dbReference type="GO" id="GO:0008124">
    <property type="term" value="F:4-alpha-hydroxytetrahydrobiopterin dehydratase activity"/>
    <property type="evidence" value="ECO:0007669"/>
    <property type="project" value="UniProtKB-UniRule"/>
</dbReference>
<dbReference type="GO" id="GO:0006729">
    <property type="term" value="P:tetrahydrobiopterin biosynthetic process"/>
    <property type="evidence" value="ECO:0007669"/>
    <property type="project" value="InterPro"/>
</dbReference>
<dbReference type="CDD" id="cd00488">
    <property type="entry name" value="PCD_DCoH"/>
    <property type="match status" value="1"/>
</dbReference>
<dbReference type="Gene3D" id="3.30.1360.20">
    <property type="entry name" value="Transcriptional coactivator/pterin dehydratase"/>
    <property type="match status" value="1"/>
</dbReference>
<dbReference type="HAMAP" id="MF_00434">
    <property type="entry name" value="Pterin_4_alpha"/>
    <property type="match status" value="1"/>
</dbReference>
<dbReference type="InterPro" id="IPR036428">
    <property type="entry name" value="PCD_sf"/>
</dbReference>
<dbReference type="InterPro" id="IPR001533">
    <property type="entry name" value="Pterin_deHydtase"/>
</dbReference>
<dbReference type="NCBIfam" id="NF002017">
    <property type="entry name" value="PRK00823.1-2"/>
    <property type="match status" value="1"/>
</dbReference>
<dbReference type="PANTHER" id="PTHR12599">
    <property type="entry name" value="PTERIN-4-ALPHA-CARBINOLAMINE DEHYDRATASE"/>
    <property type="match status" value="1"/>
</dbReference>
<dbReference type="PANTHER" id="PTHR12599:SF0">
    <property type="entry name" value="PTERIN-4-ALPHA-CARBINOLAMINE DEHYDRATASE"/>
    <property type="match status" value="1"/>
</dbReference>
<dbReference type="Pfam" id="PF01329">
    <property type="entry name" value="Pterin_4a"/>
    <property type="match status" value="1"/>
</dbReference>
<dbReference type="SUPFAM" id="SSF55248">
    <property type="entry name" value="PCD-like"/>
    <property type="match status" value="1"/>
</dbReference>
<sequence length="94" mass="10454">MAVLSNDQVDAALPNLPGWERAAGALRRSVKFPTFLDGIDAVRRVAEFAEEKDHHPDIDIRWRTVTFALVTHAAGGITEKDVQMAEEINRILSD</sequence>
<keyword id="KW-0456">Lyase</keyword>
<keyword id="KW-1185">Reference proteome</keyword>
<protein>
    <recommendedName>
        <fullName evidence="1">Putative pterin-4-alpha-carbinolamine dehydratase</fullName>
        <shortName evidence="1">PHS</shortName>
        <ecNumber evidence="1">4.2.1.96</ecNumber>
    </recommendedName>
    <alternativeName>
        <fullName evidence="1">4-alpha-hydroxy-tetrahydropterin dehydratase</fullName>
    </alternativeName>
    <alternativeName>
        <fullName evidence="1">Pterin carbinolamine dehydratase</fullName>
        <shortName evidence="1">PCD</shortName>
    </alternativeName>
</protein>